<feature type="chain" id="PRO_0000371837" description="NADH-quinone oxidoreductase subunit D">
    <location>
        <begin position="1"/>
        <end position="417"/>
    </location>
</feature>
<name>NUOD_BURP1</name>
<organism>
    <name type="scientific">Burkholderia pseudomallei (strain 1710b)</name>
    <dbReference type="NCBI Taxonomy" id="320372"/>
    <lineage>
        <taxon>Bacteria</taxon>
        <taxon>Pseudomonadati</taxon>
        <taxon>Pseudomonadota</taxon>
        <taxon>Betaproteobacteria</taxon>
        <taxon>Burkholderiales</taxon>
        <taxon>Burkholderiaceae</taxon>
        <taxon>Burkholderia</taxon>
        <taxon>pseudomallei group</taxon>
    </lineage>
</organism>
<dbReference type="EC" id="7.1.1.-" evidence="1"/>
<dbReference type="EMBL" id="CP000124">
    <property type="protein sequence ID" value="ABA47534.1"/>
    <property type="molecule type" value="Genomic_DNA"/>
</dbReference>
<dbReference type="RefSeq" id="WP_004185833.1">
    <property type="nucleotide sequence ID" value="NC_007434.1"/>
</dbReference>
<dbReference type="SMR" id="Q3JUA6"/>
<dbReference type="EnsemblBacteria" id="ABA47534">
    <property type="protein sequence ID" value="ABA47534"/>
    <property type="gene ID" value="BURPS1710b_1438"/>
</dbReference>
<dbReference type="KEGG" id="bpm:BURPS1710b_1438"/>
<dbReference type="HOGENOM" id="CLU_015134_1_1_4"/>
<dbReference type="Proteomes" id="UP000002700">
    <property type="component" value="Chromosome I"/>
</dbReference>
<dbReference type="GO" id="GO:0005886">
    <property type="term" value="C:plasma membrane"/>
    <property type="evidence" value="ECO:0007669"/>
    <property type="project" value="UniProtKB-SubCell"/>
</dbReference>
<dbReference type="GO" id="GO:0051287">
    <property type="term" value="F:NAD binding"/>
    <property type="evidence" value="ECO:0007669"/>
    <property type="project" value="InterPro"/>
</dbReference>
<dbReference type="GO" id="GO:0050136">
    <property type="term" value="F:NADH:ubiquinone reductase (non-electrogenic) activity"/>
    <property type="evidence" value="ECO:0007669"/>
    <property type="project" value="UniProtKB-UniRule"/>
</dbReference>
<dbReference type="GO" id="GO:0048038">
    <property type="term" value="F:quinone binding"/>
    <property type="evidence" value="ECO:0007669"/>
    <property type="project" value="UniProtKB-KW"/>
</dbReference>
<dbReference type="FunFam" id="1.10.645.10:FF:000005">
    <property type="entry name" value="NADH-quinone oxidoreductase subunit D"/>
    <property type="match status" value="1"/>
</dbReference>
<dbReference type="Gene3D" id="1.10.645.10">
    <property type="entry name" value="Cytochrome-c3 Hydrogenase, chain B"/>
    <property type="match status" value="1"/>
</dbReference>
<dbReference type="HAMAP" id="MF_01358">
    <property type="entry name" value="NDH1_NuoD"/>
    <property type="match status" value="1"/>
</dbReference>
<dbReference type="InterPro" id="IPR001135">
    <property type="entry name" value="NADH_Q_OxRdtase_suD"/>
</dbReference>
<dbReference type="InterPro" id="IPR014029">
    <property type="entry name" value="NADH_UbQ_OxRdtase_49kDa_CS"/>
</dbReference>
<dbReference type="InterPro" id="IPR022885">
    <property type="entry name" value="NDH1_su_D/H"/>
</dbReference>
<dbReference type="InterPro" id="IPR029014">
    <property type="entry name" value="NiFe-Hase_large"/>
</dbReference>
<dbReference type="NCBIfam" id="TIGR01962">
    <property type="entry name" value="NuoD"/>
    <property type="match status" value="1"/>
</dbReference>
<dbReference type="NCBIfam" id="NF004739">
    <property type="entry name" value="PRK06075.1"/>
    <property type="match status" value="1"/>
</dbReference>
<dbReference type="PANTHER" id="PTHR11993:SF10">
    <property type="entry name" value="NADH DEHYDROGENASE [UBIQUINONE] IRON-SULFUR PROTEIN 2, MITOCHONDRIAL"/>
    <property type="match status" value="1"/>
</dbReference>
<dbReference type="PANTHER" id="PTHR11993">
    <property type="entry name" value="NADH-UBIQUINONE OXIDOREDUCTASE 49 KDA SUBUNIT"/>
    <property type="match status" value="1"/>
</dbReference>
<dbReference type="Pfam" id="PF00346">
    <property type="entry name" value="Complex1_49kDa"/>
    <property type="match status" value="1"/>
</dbReference>
<dbReference type="SUPFAM" id="SSF56762">
    <property type="entry name" value="HydB/Nqo4-like"/>
    <property type="match status" value="1"/>
</dbReference>
<dbReference type="PROSITE" id="PS00535">
    <property type="entry name" value="COMPLEX1_49K"/>
    <property type="match status" value="1"/>
</dbReference>
<protein>
    <recommendedName>
        <fullName evidence="1">NADH-quinone oxidoreductase subunit D</fullName>
        <ecNumber evidence="1">7.1.1.-</ecNumber>
    </recommendedName>
    <alternativeName>
        <fullName evidence="1">NADH dehydrogenase I subunit D</fullName>
    </alternativeName>
    <alternativeName>
        <fullName evidence="1">NDH-1 subunit D</fullName>
    </alternativeName>
</protein>
<proteinExistence type="inferred from homology"/>
<reference key="1">
    <citation type="journal article" date="2010" name="Genome Biol. Evol.">
        <title>Continuing evolution of Burkholderia mallei through genome reduction and large-scale rearrangements.</title>
        <authorList>
            <person name="Losada L."/>
            <person name="Ronning C.M."/>
            <person name="DeShazer D."/>
            <person name="Woods D."/>
            <person name="Fedorova N."/>
            <person name="Kim H.S."/>
            <person name="Shabalina S.A."/>
            <person name="Pearson T.R."/>
            <person name="Brinkac L."/>
            <person name="Tan P."/>
            <person name="Nandi T."/>
            <person name="Crabtree J."/>
            <person name="Badger J."/>
            <person name="Beckstrom-Sternberg S."/>
            <person name="Saqib M."/>
            <person name="Schutzer S.E."/>
            <person name="Keim P."/>
            <person name="Nierman W.C."/>
        </authorList>
    </citation>
    <scope>NUCLEOTIDE SEQUENCE [LARGE SCALE GENOMIC DNA]</scope>
    <source>
        <strain>1710b</strain>
    </source>
</reference>
<sequence>MAEIKNYTLNFGPQHPAAHGVLRLVLELDGEVIQRADPHIGLLHRATEKLAENKTFIQSVPYMDRLDYVSMMVNEHGYVLAIEKLLGIEVPERAQYIRVLFDEITRVLNHLMWIGAHALDVGAMAVFLYAFREREDLMDVYEAVSGARMHAAYYRPGGVYRDLPEAMPQYKASKIRNERALAKMNEARSGSVLDFIDDFFTRFPKCVDEYETLLTDNRIWKQRLVGIGVVSPERALQLGLTGPMIRGSGIAWDLRKKQPYEVYDRLDFDIPVGVNGDCYDRYLVRVEEMRQSTRIAKQCIEWLRKNPGPVITDNHKVAPPSRVGMKTNMEDLIHHFKLFTEGFHVPEGETYAAVEHPKGEFGIYLVSDGANKPYRLKIRAPGYAHLSALDEMARGHMIADAVTIIGTQDIVFGEIDR</sequence>
<gene>
    <name evidence="1" type="primary">nuoD</name>
    <name type="ordered locus">BURPS1710b_1438</name>
</gene>
<comment type="function">
    <text evidence="1">NDH-1 shuttles electrons from NADH, via FMN and iron-sulfur (Fe-S) centers, to quinones in the respiratory chain. The immediate electron acceptor for the enzyme in this species is believed to be ubiquinone. Couples the redox reaction to proton translocation (for every two electrons transferred, four hydrogen ions are translocated across the cytoplasmic membrane), and thus conserves the redox energy in a proton gradient.</text>
</comment>
<comment type="catalytic activity">
    <reaction evidence="1">
        <text>a quinone + NADH + 5 H(+)(in) = a quinol + NAD(+) + 4 H(+)(out)</text>
        <dbReference type="Rhea" id="RHEA:57888"/>
        <dbReference type="ChEBI" id="CHEBI:15378"/>
        <dbReference type="ChEBI" id="CHEBI:24646"/>
        <dbReference type="ChEBI" id="CHEBI:57540"/>
        <dbReference type="ChEBI" id="CHEBI:57945"/>
        <dbReference type="ChEBI" id="CHEBI:132124"/>
    </reaction>
</comment>
<comment type="subunit">
    <text evidence="1">NDH-1 is composed of 14 different subunits. Subunits NuoB, C, D, E, F, and G constitute the peripheral sector of the complex.</text>
</comment>
<comment type="subcellular location">
    <subcellularLocation>
        <location evidence="1">Cell inner membrane</location>
        <topology evidence="1">Peripheral membrane protein</topology>
        <orientation evidence="1">Cytoplasmic side</orientation>
    </subcellularLocation>
</comment>
<comment type="similarity">
    <text evidence="1">Belongs to the complex I 49 kDa subunit family.</text>
</comment>
<evidence type="ECO:0000255" key="1">
    <source>
        <dbReference type="HAMAP-Rule" id="MF_01358"/>
    </source>
</evidence>
<accession>Q3JUA6</accession>
<keyword id="KW-0997">Cell inner membrane</keyword>
<keyword id="KW-1003">Cell membrane</keyword>
<keyword id="KW-0472">Membrane</keyword>
<keyword id="KW-0520">NAD</keyword>
<keyword id="KW-0874">Quinone</keyword>
<keyword id="KW-1278">Translocase</keyword>
<keyword id="KW-0813">Transport</keyword>
<keyword id="KW-0830">Ubiquinone</keyword>